<reference key="1">
    <citation type="journal article" date="2009" name="J. Bacteriol.">
        <title>Complete genome sequence of Haemophilus parasuis SH0165.</title>
        <authorList>
            <person name="Yue M."/>
            <person name="Yang F."/>
            <person name="Yang J."/>
            <person name="Bei W."/>
            <person name="Cai X."/>
            <person name="Chen L."/>
            <person name="Dong J."/>
            <person name="Zhou R."/>
            <person name="Jin M."/>
            <person name="Jin Q."/>
            <person name="Chen H."/>
        </authorList>
    </citation>
    <scope>NUCLEOTIDE SEQUENCE [LARGE SCALE GENOMIC DNA]</scope>
    <source>
        <strain>SH0165</strain>
    </source>
</reference>
<dbReference type="EMBL" id="CP001321">
    <property type="protein sequence ID" value="ACL33234.1"/>
    <property type="molecule type" value="Genomic_DNA"/>
</dbReference>
<dbReference type="RefSeq" id="WP_005714356.1">
    <property type="nucleotide sequence ID" value="NC_011852.1"/>
</dbReference>
<dbReference type="SMR" id="B8F7D2"/>
<dbReference type="STRING" id="557723.HAPS_1705"/>
<dbReference type="GeneID" id="66619786"/>
<dbReference type="KEGG" id="hap:HAPS_1705"/>
<dbReference type="HOGENOM" id="CLU_074237_2_0_6"/>
<dbReference type="Proteomes" id="UP000006743">
    <property type="component" value="Chromosome"/>
</dbReference>
<dbReference type="GO" id="GO:0022625">
    <property type="term" value="C:cytosolic large ribosomal subunit"/>
    <property type="evidence" value="ECO:0007669"/>
    <property type="project" value="TreeGrafter"/>
</dbReference>
<dbReference type="GO" id="GO:0070180">
    <property type="term" value="F:large ribosomal subunit rRNA binding"/>
    <property type="evidence" value="ECO:0007669"/>
    <property type="project" value="UniProtKB-UniRule"/>
</dbReference>
<dbReference type="GO" id="GO:0003735">
    <property type="term" value="F:structural constituent of ribosome"/>
    <property type="evidence" value="ECO:0007669"/>
    <property type="project" value="InterPro"/>
</dbReference>
<dbReference type="GO" id="GO:0006412">
    <property type="term" value="P:translation"/>
    <property type="evidence" value="ECO:0007669"/>
    <property type="project" value="UniProtKB-UniRule"/>
</dbReference>
<dbReference type="CDD" id="cd00349">
    <property type="entry name" value="Ribosomal_L11"/>
    <property type="match status" value="1"/>
</dbReference>
<dbReference type="FunFam" id="1.10.10.250:FF:000001">
    <property type="entry name" value="50S ribosomal protein L11"/>
    <property type="match status" value="1"/>
</dbReference>
<dbReference type="FunFam" id="3.30.1550.10:FF:000001">
    <property type="entry name" value="50S ribosomal protein L11"/>
    <property type="match status" value="1"/>
</dbReference>
<dbReference type="Gene3D" id="1.10.10.250">
    <property type="entry name" value="Ribosomal protein L11, C-terminal domain"/>
    <property type="match status" value="1"/>
</dbReference>
<dbReference type="Gene3D" id="3.30.1550.10">
    <property type="entry name" value="Ribosomal protein L11/L12, N-terminal domain"/>
    <property type="match status" value="1"/>
</dbReference>
<dbReference type="HAMAP" id="MF_00736">
    <property type="entry name" value="Ribosomal_uL11"/>
    <property type="match status" value="1"/>
</dbReference>
<dbReference type="InterPro" id="IPR000911">
    <property type="entry name" value="Ribosomal_uL11"/>
</dbReference>
<dbReference type="InterPro" id="IPR006519">
    <property type="entry name" value="Ribosomal_uL11_bac-typ"/>
</dbReference>
<dbReference type="InterPro" id="IPR020783">
    <property type="entry name" value="Ribosomal_uL11_C"/>
</dbReference>
<dbReference type="InterPro" id="IPR036769">
    <property type="entry name" value="Ribosomal_uL11_C_sf"/>
</dbReference>
<dbReference type="InterPro" id="IPR020784">
    <property type="entry name" value="Ribosomal_uL11_N"/>
</dbReference>
<dbReference type="InterPro" id="IPR036796">
    <property type="entry name" value="Ribosomal_uL11_N_sf"/>
</dbReference>
<dbReference type="NCBIfam" id="TIGR01632">
    <property type="entry name" value="L11_bact"/>
    <property type="match status" value="1"/>
</dbReference>
<dbReference type="PANTHER" id="PTHR11661">
    <property type="entry name" value="60S RIBOSOMAL PROTEIN L12"/>
    <property type="match status" value="1"/>
</dbReference>
<dbReference type="PANTHER" id="PTHR11661:SF1">
    <property type="entry name" value="LARGE RIBOSOMAL SUBUNIT PROTEIN UL11M"/>
    <property type="match status" value="1"/>
</dbReference>
<dbReference type="Pfam" id="PF00298">
    <property type="entry name" value="Ribosomal_L11"/>
    <property type="match status" value="1"/>
</dbReference>
<dbReference type="Pfam" id="PF03946">
    <property type="entry name" value="Ribosomal_L11_N"/>
    <property type="match status" value="1"/>
</dbReference>
<dbReference type="SMART" id="SM00649">
    <property type="entry name" value="RL11"/>
    <property type="match status" value="1"/>
</dbReference>
<dbReference type="SUPFAM" id="SSF54747">
    <property type="entry name" value="Ribosomal L11/L12e N-terminal domain"/>
    <property type="match status" value="1"/>
</dbReference>
<dbReference type="SUPFAM" id="SSF46906">
    <property type="entry name" value="Ribosomal protein L11, C-terminal domain"/>
    <property type="match status" value="1"/>
</dbReference>
<dbReference type="PROSITE" id="PS00359">
    <property type="entry name" value="RIBOSOMAL_L11"/>
    <property type="match status" value="1"/>
</dbReference>
<gene>
    <name evidence="1" type="primary">rplK</name>
    <name type="ordered locus">HAPS_1705</name>
</gene>
<name>RL11_GLAP5</name>
<accession>B8F7D2</accession>
<proteinExistence type="inferred from homology"/>
<evidence type="ECO:0000255" key="1">
    <source>
        <dbReference type="HAMAP-Rule" id="MF_00736"/>
    </source>
</evidence>
<evidence type="ECO:0000305" key="2"/>
<feature type="chain" id="PRO_1000195646" description="Large ribosomal subunit protein uL11">
    <location>
        <begin position="1"/>
        <end position="142"/>
    </location>
</feature>
<keyword id="KW-0488">Methylation</keyword>
<keyword id="KW-1185">Reference proteome</keyword>
<keyword id="KW-0687">Ribonucleoprotein</keyword>
<keyword id="KW-0689">Ribosomal protein</keyword>
<keyword id="KW-0694">RNA-binding</keyword>
<keyword id="KW-0699">rRNA-binding</keyword>
<organism>
    <name type="scientific">Glaesserella parasuis serovar 5 (strain SH0165)</name>
    <name type="common">Haemophilus parasuis</name>
    <dbReference type="NCBI Taxonomy" id="557723"/>
    <lineage>
        <taxon>Bacteria</taxon>
        <taxon>Pseudomonadati</taxon>
        <taxon>Pseudomonadota</taxon>
        <taxon>Gammaproteobacteria</taxon>
        <taxon>Pasteurellales</taxon>
        <taxon>Pasteurellaceae</taxon>
        <taxon>Glaesserella</taxon>
    </lineage>
</organism>
<comment type="function">
    <text evidence="1">Forms part of the ribosomal stalk which helps the ribosome interact with GTP-bound translation factors.</text>
</comment>
<comment type="subunit">
    <text evidence="1">Part of the ribosomal stalk of the 50S ribosomal subunit. Interacts with L10 and the large rRNA to form the base of the stalk. L10 forms an elongated spine to which L12 dimers bind in a sequential fashion forming a multimeric L10(L12)X complex.</text>
</comment>
<comment type="PTM">
    <text evidence="1">One or more lysine residues are methylated.</text>
</comment>
<comment type="similarity">
    <text evidence="1">Belongs to the universal ribosomal protein uL11 family.</text>
</comment>
<protein>
    <recommendedName>
        <fullName evidence="1">Large ribosomal subunit protein uL11</fullName>
    </recommendedName>
    <alternativeName>
        <fullName evidence="2">50S ribosomal protein L11</fullName>
    </alternativeName>
</protein>
<sequence length="142" mass="14948">MAKKVQAYVKLQVAAGMANPSPPVGPALGQQGVNIMEFCKAFNARTESLEKGLPIPVVITVYADRSFTFVTKTPPAAVLLKKALGLKSGSSKPNKDKVGTVTQAQLRQIAETKAADMTGATIETKMKSIAGTARSMGLIVEE</sequence>